<feature type="chain" id="PRO_1000148626" description="ATP synthase gamma chain">
    <location>
        <begin position="1"/>
        <end position="296"/>
    </location>
</feature>
<protein>
    <recommendedName>
        <fullName evidence="1">ATP synthase gamma chain</fullName>
    </recommendedName>
    <alternativeName>
        <fullName evidence="1">ATP synthase F1 sector gamma subunit</fullName>
    </alternativeName>
    <alternativeName>
        <fullName evidence="1">F-ATPase gamma subunit</fullName>
    </alternativeName>
</protein>
<proteinExistence type="inferred from homology"/>
<reference key="1">
    <citation type="submission" date="2008-12" db="EMBL/GenBank/DDBJ databases">
        <title>Complete sequence of chromosome of Methylobacterium chloromethanicum CM4.</title>
        <authorList>
            <consortium name="US DOE Joint Genome Institute"/>
            <person name="Lucas S."/>
            <person name="Copeland A."/>
            <person name="Lapidus A."/>
            <person name="Glavina del Rio T."/>
            <person name="Dalin E."/>
            <person name="Tice H."/>
            <person name="Bruce D."/>
            <person name="Goodwin L."/>
            <person name="Pitluck S."/>
            <person name="Chertkov O."/>
            <person name="Brettin T."/>
            <person name="Detter J.C."/>
            <person name="Han C."/>
            <person name="Larimer F."/>
            <person name="Land M."/>
            <person name="Hauser L."/>
            <person name="Kyrpides N."/>
            <person name="Mikhailova N."/>
            <person name="Marx C."/>
            <person name="Richardson P."/>
        </authorList>
    </citation>
    <scope>NUCLEOTIDE SEQUENCE [LARGE SCALE GENOMIC DNA]</scope>
    <source>
        <strain>CM4 / NCIMB 13688</strain>
    </source>
</reference>
<dbReference type="EMBL" id="CP001298">
    <property type="protein sequence ID" value="ACK82608.1"/>
    <property type="molecule type" value="Genomic_DNA"/>
</dbReference>
<dbReference type="RefSeq" id="WP_015950409.1">
    <property type="nucleotide sequence ID" value="NC_011757.1"/>
</dbReference>
<dbReference type="SMR" id="B7KUA3"/>
<dbReference type="KEGG" id="mch:Mchl_1745"/>
<dbReference type="HOGENOM" id="CLU_050669_0_1_5"/>
<dbReference type="Proteomes" id="UP000002385">
    <property type="component" value="Chromosome"/>
</dbReference>
<dbReference type="GO" id="GO:0005886">
    <property type="term" value="C:plasma membrane"/>
    <property type="evidence" value="ECO:0007669"/>
    <property type="project" value="UniProtKB-SubCell"/>
</dbReference>
<dbReference type="GO" id="GO:0045259">
    <property type="term" value="C:proton-transporting ATP synthase complex"/>
    <property type="evidence" value="ECO:0007669"/>
    <property type="project" value="UniProtKB-KW"/>
</dbReference>
<dbReference type="GO" id="GO:0005524">
    <property type="term" value="F:ATP binding"/>
    <property type="evidence" value="ECO:0007669"/>
    <property type="project" value="UniProtKB-UniRule"/>
</dbReference>
<dbReference type="GO" id="GO:0046933">
    <property type="term" value="F:proton-transporting ATP synthase activity, rotational mechanism"/>
    <property type="evidence" value="ECO:0007669"/>
    <property type="project" value="UniProtKB-UniRule"/>
</dbReference>
<dbReference type="GO" id="GO:0042777">
    <property type="term" value="P:proton motive force-driven plasma membrane ATP synthesis"/>
    <property type="evidence" value="ECO:0007669"/>
    <property type="project" value="UniProtKB-UniRule"/>
</dbReference>
<dbReference type="CDD" id="cd12151">
    <property type="entry name" value="F1-ATPase_gamma"/>
    <property type="match status" value="1"/>
</dbReference>
<dbReference type="FunFam" id="1.10.287.80:FF:000001">
    <property type="entry name" value="ATP synthase gamma chain"/>
    <property type="match status" value="1"/>
</dbReference>
<dbReference type="FunFam" id="1.10.287.80:FF:000003">
    <property type="entry name" value="ATP synthase gamma chain, chloroplastic"/>
    <property type="match status" value="1"/>
</dbReference>
<dbReference type="Gene3D" id="3.40.1380.10">
    <property type="match status" value="1"/>
</dbReference>
<dbReference type="Gene3D" id="1.10.287.80">
    <property type="entry name" value="ATP synthase, gamma subunit, helix hairpin domain"/>
    <property type="match status" value="1"/>
</dbReference>
<dbReference type="HAMAP" id="MF_00815">
    <property type="entry name" value="ATP_synth_gamma_bact"/>
    <property type="match status" value="1"/>
</dbReference>
<dbReference type="InterPro" id="IPR035968">
    <property type="entry name" value="ATP_synth_F1_ATPase_gsu"/>
</dbReference>
<dbReference type="InterPro" id="IPR000131">
    <property type="entry name" value="ATP_synth_F1_gsu"/>
</dbReference>
<dbReference type="InterPro" id="IPR023632">
    <property type="entry name" value="ATP_synth_F1_gsu_CS"/>
</dbReference>
<dbReference type="NCBIfam" id="TIGR01146">
    <property type="entry name" value="ATPsyn_F1gamma"/>
    <property type="match status" value="1"/>
</dbReference>
<dbReference type="NCBIfam" id="NF004146">
    <property type="entry name" value="PRK05621.1-4"/>
    <property type="match status" value="1"/>
</dbReference>
<dbReference type="PANTHER" id="PTHR11693">
    <property type="entry name" value="ATP SYNTHASE GAMMA CHAIN"/>
    <property type="match status" value="1"/>
</dbReference>
<dbReference type="PANTHER" id="PTHR11693:SF22">
    <property type="entry name" value="ATP SYNTHASE SUBUNIT GAMMA, MITOCHONDRIAL"/>
    <property type="match status" value="1"/>
</dbReference>
<dbReference type="Pfam" id="PF00231">
    <property type="entry name" value="ATP-synt"/>
    <property type="match status" value="1"/>
</dbReference>
<dbReference type="PIRSF" id="PIRSF039089">
    <property type="entry name" value="ATP_synthase_gamma"/>
    <property type="match status" value="1"/>
</dbReference>
<dbReference type="PRINTS" id="PR00126">
    <property type="entry name" value="ATPASEGAMMA"/>
</dbReference>
<dbReference type="SUPFAM" id="SSF52943">
    <property type="entry name" value="ATP synthase (F1-ATPase), gamma subunit"/>
    <property type="match status" value="1"/>
</dbReference>
<dbReference type="PROSITE" id="PS00153">
    <property type="entry name" value="ATPASE_GAMMA"/>
    <property type="match status" value="1"/>
</dbReference>
<gene>
    <name evidence="1" type="primary">atpG</name>
    <name type="ordered locus">Mchl_1745</name>
</gene>
<organism>
    <name type="scientific">Methylorubrum extorquens (strain CM4 / NCIMB 13688)</name>
    <name type="common">Methylobacterium extorquens</name>
    <dbReference type="NCBI Taxonomy" id="440085"/>
    <lineage>
        <taxon>Bacteria</taxon>
        <taxon>Pseudomonadati</taxon>
        <taxon>Pseudomonadota</taxon>
        <taxon>Alphaproteobacteria</taxon>
        <taxon>Hyphomicrobiales</taxon>
        <taxon>Methylobacteriaceae</taxon>
        <taxon>Methylorubrum</taxon>
    </lineage>
</organism>
<keyword id="KW-0066">ATP synthesis</keyword>
<keyword id="KW-0997">Cell inner membrane</keyword>
<keyword id="KW-1003">Cell membrane</keyword>
<keyword id="KW-0139">CF(1)</keyword>
<keyword id="KW-0375">Hydrogen ion transport</keyword>
<keyword id="KW-0406">Ion transport</keyword>
<keyword id="KW-0472">Membrane</keyword>
<keyword id="KW-0813">Transport</keyword>
<sequence>MPSLKDLRNRITSVKATQKITKAMQMVAAAKLRRAQNAAENGRPYAERMAQVLGNLAGNLIGGVGAPRLLSGTGQDRVHLLVVCTGDRGLAGAFNSSIARLARDHANRLMADGKTVKIITIGKKGLDVLRRQFRDQIIASRDIRGNKPVDYPFAAEIADDILARFEAGEFDVATLFYSEFRSVISQIPTAQKLIPAELPTAEGASATGAGSDAAMEFEPNEETILETLLPKNLTVQIFRALLENAASEQGARMSAMDSATRNAGEMIKKQTLIYNRTRQAMITKELIEIISGAEAL</sequence>
<comment type="function">
    <text evidence="1">Produces ATP from ADP in the presence of a proton gradient across the membrane. The gamma chain is believed to be important in regulating ATPase activity and the flow of protons through the CF(0) complex.</text>
</comment>
<comment type="subunit">
    <text evidence="1">F-type ATPases have 2 components, CF(1) - the catalytic core - and CF(0) - the membrane proton channel. CF(1) has five subunits: alpha(3), beta(3), gamma(1), delta(1), epsilon(1). CF(0) has three main subunits: a, b and c.</text>
</comment>
<comment type="subcellular location">
    <subcellularLocation>
        <location evidence="1">Cell inner membrane</location>
        <topology evidence="1">Peripheral membrane protein</topology>
    </subcellularLocation>
</comment>
<comment type="similarity">
    <text evidence="1">Belongs to the ATPase gamma chain family.</text>
</comment>
<name>ATPG_METC4</name>
<accession>B7KUA3</accession>
<evidence type="ECO:0000255" key="1">
    <source>
        <dbReference type="HAMAP-Rule" id="MF_00815"/>
    </source>
</evidence>